<keyword id="KW-0175">Coiled coil</keyword>
<keyword id="KW-1185">Reference proteome</keyword>
<sequence length="67" mass="7636">MNFQLDLIKDKVEFFEAASLQELEKKINTQIENNKAIMLRVKSVSHQTLVAEGRILYSAVVHFSAEA</sequence>
<accession>O32030</accession>
<reference key="1">
    <citation type="journal article" date="1997" name="Nature">
        <title>The complete genome sequence of the Gram-positive bacterium Bacillus subtilis.</title>
        <authorList>
            <person name="Kunst F."/>
            <person name="Ogasawara N."/>
            <person name="Moszer I."/>
            <person name="Albertini A.M."/>
            <person name="Alloni G."/>
            <person name="Azevedo V."/>
            <person name="Bertero M.G."/>
            <person name="Bessieres P."/>
            <person name="Bolotin A."/>
            <person name="Borchert S."/>
            <person name="Borriss R."/>
            <person name="Boursier L."/>
            <person name="Brans A."/>
            <person name="Braun M."/>
            <person name="Brignell S.C."/>
            <person name="Bron S."/>
            <person name="Brouillet S."/>
            <person name="Bruschi C.V."/>
            <person name="Caldwell B."/>
            <person name="Capuano V."/>
            <person name="Carter N.M."/>
            <person name="Choi S.-K."/>
            <person name="Codani J.-J."/>
            <person name="Connerton I.F."/>
            <person name="Cummings N.J."/>
            <person name="Daniel R.A."/>
            <person name="Denizot F."/>
            <person name="Devine K.M."/>
            <person name="Duesterhoeft A."/>
            <person name="Ehrlich S.D."/>
            <person name="Emmerson P.T."/>
            <person name="Entian K.-D."/>
            <person name="Errington J."/>
            <person name="Fabret C."/>
            <person name="Ferrari E."/>
            <person name="Foulger D."/>
            <person name="Fritz C."/>
            <person name="Fujita M."/>
            <person name="Fujita Y."/>
            <person name="Fuma S."/>
            <person name="Galizzi A."/>
            <person name="Galleron N."/>
            <person name="Ghim S.-Y."/>
            <person name="Glaser P."/>
            <person name="Goffeau A."/>
            <person name="Golightly E.J."/>
            <person name="Grandi G."/>
            <person name="Guiseppi G."/>
            <person name="Guy B.J."/>
            <person name="Haga K."/>
            <person name="Haiech J."/>
            <person name="Harwood C.R."/>
            <person name="Henaut A."/>
            <person name="Hilbert H."/>
            <person name="Holsappel S."/>
            <person name="Hosono S."/>
            <person name="Hullo M.-F."/>
            <person name="Itaya M."/>
            <person name="Jones L.-M."/>
            <person name="Joris B."/>
            <person name="Karamata D."/>
            <person name="Kasahara Y."/>
            <person name="Klaerr-Blanchard M."/>
            <person name="Klein C."/>
            <person name="Kobayashi Y."/>
            <person name="Koetter P."/>
            <person name="Koningstein G."/>
            <person name="Krogh S."/>
            <person name="Kumano M."/>
            <person name="Kurita K."/>
            <person name="Lapidus A."/>
            <person name="Lardinois S."/>
            <person name="Lauber J."/>
            <person name="Lazarevic V."/>
            <person name="Lee S.-M."/>
            <person name="Levine A."/>
            <person name="Liu H."/>
            <person name="Masuda S."/>
            <person name="Mauel C."/>
            <person name="Medigue C."/>
            <person name="Medina N."/>
            <person name="Mellado R.P."/>
            <person name="Mizuno M."/>
            <person name="Moestl D."/>
            <person name="Nakai S."/>
            <person name="Noback M."/>
            <person name="Noone D."/>
            <person name="O'Reilly M."/>
            <person name="Ogawa K."/>
            <person name="Ogiwara A."/>
            <person name="Oudega B."/>
            <person name="Park S.-H."/>
            <person name="Parro V."/>
            <person name="Pohl T.M."/>
            <person name="Portetelle D."/>
            <person name="Porwollik S."/>
            <person name="Prescott A.M."/>
            <person name="Presecan E."/>
            <person name="Pujic P."/>
            <person name="Purnelle B."/>
            <person name="Rapoport G."/>
            <person name="Rey M."/>
            <person name="Reynolds S."/>
            <person name="Rieger M."/>
            <person name="Rivolta C."/>
            <person name="Rocha E."/>
            <person name="Roche B."/>
            <person name="Rose M."/>
            <person name="Sadaie Y."/>
            <person name="Sato T."/>
            <person name="Scanlan E."/>
            <person name="Schleich S."/>
            <person name="Schroeter R."/>
            <person name="Scoffone F."/>
            <person name="Sekiguchi J."/>
            <person name="Sekowska A."/>
            <person name="Seror S.J."/>
            <person name="Serror P."/>
            <person name="Shin B.-S."/>
            <person name="Soldo B."/>
            <person name="Sorokin A."/>
            <person name="Tacconi E."/>
            <person name="Takagi T."/>
            <person name="Takahashi H."/>
            <person name="Takemaru K."/>
            <person name="Takeuchi M."/>
            <person name="Tamakoshi A."/>
            <person name="Tanaka T."/>
            <person name="Terpstra P."/>
            <person name="Tognoni A."/>
            <person name="Tosato V."/>
            <person name="Uchiyama S."/>
            <person name="Vandenbol M."/>
            <person name="Vannier F."/>
            <person name="Vassarotti A."/>
            <person name="Viari A."/>
            <person name="Wambutt R."/>
            <person name="Wedler E."/>
            <person name="Wedler H."/>
            <person name="Weitzenegger T."/>
            <person name="Winters P."/>
            <person name="Wipat A."/>
            <person name="Yamamoto H."/>
            <person name="Yamane K."/>
            <person name="Yasumoto K."/>
            <person name="Yata K."/>
            <person name="Yoshida K."/>
            <person name="Yoshikawa H.-F."/>
            <person name="Zumstein E."/>
            <person name="Yoshikawa H."/>
            <person name="Danchin A."/>
        </authorList>
    </citation>
    <scope>NUCLEOTIDE SEQUENCE [LARGE SCALE GENOMIC DNA]</scope>
    <source>
        <strain>168</strain>
    </source>
</reference>
<organism>
    <name type="scientific">Bacillus subtilis (strain 168)</name>
    <dbReference type="NCBI Taxonomy" id="224308"/>
    <lineage>
        <taxon>Bacteria</taxon>
        <taxon>Bacillati</taxon>
        <taxon>Bacillota</taxon>
        <taxon>Bacilli</taxon>
        <taxon>Bacillales</taxon>
        <taxon>Bacillaceae</taxon>
        <taxon>Bacillus</taxon>
    </lineage>
</organism>
<gene>
    <name type="primary">yrzA</name>
    <name type="ordered locus">BSU27290</name>
</gene>
<proteinExistence type="predicted"/>
<protein>
    <recommendedName>
        <fullName>Uncharacterized protein YrzA</fullName>
    </recommendedName>
</protein>
<evidence type="ECO:0000255" key="1"/>
<name>YRZA_BACSU</name>
<feature type="chain" id="PRO_0000049884" description="Uncharacterized protein YrzA">
    <location>
        <begin position="1"/>
        <end position="67"/>
    </location>
</feature>
<feature type="coiled-coil region" evidence="1">
    <location>
        <begin position="17"/>
        <end position="47"/>
    </location>
</feature>
<dbReference type="EMBL" id="AL009126">
    <property type="protein sequence ID" value="CAB14671.1"/>
    <property type="molecule type" value="Genomic_DNA"/>
</dbReference>
<dbReference type="PIR" id="H69981">
    <property type="entry name" value="H69981"/>
</dbReference>
<dbReference type="RefSeq" id="NP_390607.1">
    <property type="nucleotide sequence ID" value="NC_000964.3"/>
</dbReference>
<dbReference type="RefSeq" id="WP_009967883.1">
    <property type="nucleotide sequence ID" value="NZ_OZ025638.1"/>
</dbReference>
<dbReference type="SMR" id="O32030"/>
<dbReference type="FunCoup" id="O32030">
    <property type="interactions" value="36"/>
</dbReference>
<dbReference type="STRING" id="224308.BSU27290"/>
<dbReference type="PaxDb" id="224308-BSU27290"/>
<dbReference type="EnsemblBacteria" id="CAB14671">
    <property type="protein sequence ID" value="CAB14671"/>
    <property type="gene ID" value="BSU_27290"/>
</dbReference>
<dbReference type="GeneID" id="937564"/>
<dbReference type="KEGG" id="bsu:BSU27290"/>
<dbReference type="PATRIC" id="fig|224308.179.peg.2965"/>
<dbReference type="eggNOG" id="ENOG50331G7">
    <property type="taxonomic scope" value="Bacteria"/>
</dbReference>
<dbReference type="InParanoid" id="O32030"/>
<dbReference type="OrthoDB" id="2454327at2"/>
<dbReference type="BioCyc" id="BSUB:BSU27290-MONOMER"/>
<dbReference type="Proteomes" id="UP000001570">
    <property type="component" value="Chromosome"/>
</dbReference>
<dbReference type="InterPro" id="IPR019686">
    <property type="entry name" value="DUF2536"/>
</dbReference>
<dbReference type="Pfam" id="PF10750">
    <property type="entry name" value="DUF2536"/>
    <property type="match status" value="1"/>
</dbReference>